<reference key="1">
    <citation type="journal article" date="1998" name="Plant Physiol.">
        <title>Dedicated roles of plastid transketolases during the early onset of isoprenoid biogenesis in pepper fruits.</title>
        <authorList>
            <person name="Bouvier F."/>
            <person name="D'Harlingue A."/>
            <person name="Suire C."/>
            <person name="Backhaus R.A."/>
            <person name="Camara B."/>
        </authorList>
    </citation>
    <scope>NUCLEOTIDE SEQUENCE [MRNA]</scope>
</reference>
<dbReference type="EC" id="2.2.1.7"/>
<dbReference type="EMBL" id="Y15782">
    <property type="protein sequence ID" value="CAA75778.1"/>
    <property type="molecule type" value="mRNA"/>
</dbReference>
<dbReference type="PIR" id="T09543">
    <property type="entry name" value="T09543"/>
</dbReference>
<dbReference type="SMR" id="O78328"/>
<dbReference type="UniPathway" id="UPA00064">
    <property type="reaction ID" value="UER00091"/>
</dbReference>
<dbReference type="GO" id="GO:0009507">
    <property type="term" value="C:chloroplast"/>
    <property type="evidence" value="ECO:0007669"/>
    <property type="project" value="UniProtKB-SubCell"/>
</dbReference>
<dbReference type="GO" id="GO:0008661">
    <property type="term" value="F:1-deoxy-D-xylulose-5-phosphate synthase activity"/>
    <property type="evidence" value="ECO:0007669"/>
    <property type="project" value="UniProtKB-EC"/>
</dbReference>
<dbReference type="GO" id="GO:0046872">
    <property type="term" value="F:metal ion binding"/>
    <property type="evidence" value="ECO:0007669"/>
    <property type="project" value="UniProtKB-KW"/>
</dbReference>
<dbReference type="GO" id="GO:0052865">
    <property type="term" value="P:1-deoxy-D-xylulose 5-phosphate biosynthetic process"/>
    <property type="evidence" value="ECO:0007669"/>
    <property type="project" value="UniProtKB-UniPathway"/>
</dbReference>
<dbReference type="GO" id="GO:0019682">
    <property type="term" value="P:glyceraldehyde-3-phosphate metabolic process"/>
    <property type="evidence" value="ECO:0007669"/>
    <property type="project" value="UniProtKB-ARBA"/>
</dbReference>
<dbReference type="GO" id="GO:0016114">
    <property type="term" value="P:terpenoid biosynthetic process"/>
    <property type="evidence" value="ECO:0007669"/>
    <property type="project" value="InterPro"/>
</dbReference>
<dbReference type="GO" id="GO:0009228">
    <property type="term" value="P:thiamine biosynthetic process"/>
    <property type="evidence" value="ECO:0007669"/>
    <property type="project" value="UniProtKB-KW"/>
</dbReference>
<dbReference type="CDD" id="cd02007">
    <property type="entry name" value="TPP_DXS"/>
    <property type="match status" value="1"/>
</dbReference>
<dbReference type="CDD" id="cd07033">
    <property type="entry name" value="TPP_PYR_DXS_TK_like"/>
    <property type="match status" value="1"/>
</dbReference>
<dbReference type="FunFam" id="3.40.50.920:FF:000002">
    <property type="entry name" value="1-deoxy-D-xylulose-5-phosphate synthase"/>
    <property type="match status" value="1"/>
</dbReference>
<dbReference type="FunFam" id="3.40.50.970:FF:000005">
    <property type="entry name" value="1-deoxy-D-xylulose-5-phosphate synthase"/>
    <property type="match status" value="1"/>
</dbReference>
<dbReference type="Gene3D" id="3.40.50.920">
    <property type="match status" value="1"/>
</dbReference>
<dbReference type="Gene3D" id="3.40.50.970">
    <property type="match status" value="2"/>
</dbReference>
<dbReference type="HAMAP" id="MF_00315">
    <property type="entry name" value="DXP_synth"/>
    <property type="match status" value="1"/>
</dbReference>
<dbReference type="InterPro" id="IPR005477">
    <property type="entry name" value="Dxylulose-5-P_synthase"/>
</dbReference>
<dbReference type="InterPro" id="IPR029061">
    <property type="entry name" value="THDP-binding"/>
</dbReference>
<dbReference type="InterPro" id="IPR009014">
    <property type="entry name" value="Transketo_C/PFOR_II"/>
</dbReference>
<dbReference type="InterPro" id="IPR005475">
    <property type="entry name" value="Transketolase-like_Pyr-bd"/>
</dbReference>
<dbReference type="InterPro" id="IPR020826">
    <property type="entry name" value="Transketolase_BS"/>
</dbReference>
<dbReference type="InterPro" id="IPR033248">
    <property type="entry name" value="Transketolase_C"/>
</dbReference>
<dbReference type="InterPro" id="IPR049557">
    <property type="entry name" value="Transketolase_CS"/>
</dbReference>
<dbReference type="NCBIfam" id="TIGR00204">
    <property type="entry name" value="dxs"/>
    <property type="match status" value="1"/>
</dbReference>
<dbReference type="NCBIfam" id="NF003933">
    <property type="entry name" value="PRK05444.2-2"/>
    <property type="match status" value="1"/>
</dbReference>
<dbReference type="PANTHER" id="PTHR43322">
    <property type="entry name" value="1-D-DEOXYXYLULOSE 5-PHOSPHATE SYNTHASE-RELATED"/>
    <property type="match status" value="1"/>
</dbReference>
<dbReference type="PANTHER" id="PTHR43322:SF5">
    <property type="entry name" value="1-DEOXY-D-XYLULOSE-5-PHOSPHATE SYNTHASE, CHLOROPLASTIC"/>
    <property type="match status" value="1"/>
</dbReference>
<dbReference type="Pfam" id="PF13292">
    <property type="entry name" value="DXP_synthase_N"/>
    <property type="match status" value="1"/>
</dbReference>
<dbReference type="Pfam" id="PF02779">
    <property type="entry name" value="Transket_pyr"/>
    <property type="match status" value="1"/>
</dbReference>
<dbReference type="Pfam" id="PF02780">
    <property type="entry name" value="Transketolase_C"/>
    <property type="match status" value="1"/>
</dbReference>
<dbReference type="SMART" id="SM00861">
    <property type="entry name" value="Transket_pyr"/>
    <property type="match status" value="1"/>
</dbReference>
<dbReference type="SUPFAM" id="SSF52518">
    <property type="entry name" value="Thiamin diphosphate-binding fold (THDP-binding)"/>
    <property type="match status" value="2"/>
</dbReference>
<dbReference type="SUPFAM" id="SSF52922">
    <property type="entry name" value="TK C-terminal domain-like"/>
    <property type="match status" value="1"/>
</dbReference>
<dbReference type="PROSITE" id="PS00801">
    <property type="entry name" value="TRANSKETOLASE_1"/>
    <property type="match status" value="1"/>
</dbReference>
<dbReference type="PROSITE" id="PS00802">
    <property type="entry name" value="TRANSKETOLASE_2"/>
    <property type="match status" value="1"/>
</dbReference>
<comment type="function">
    <text evidence="1">Catalyzes the acyloin condensation reaction between C atoms 2 and 3 of pyruvate and glyceraldehyde 3-phosphate to yield 1-deoxy-D-xylulose-5-phosphate (DXP).</text>
</comment>
<comment type="catalytic activity">
    <reaction>
        <text>D-glyceraldehyde 3-phosphate + pyruvate + H(+) = 1-deoxy-D-xylulose 5-phosphate + CO2</text>
        <dbReference type="Rhea" id="RHEA:12605"/>
        <dbReference type="ChEBI" id="CHEBI:15361"/>
        <dbReference type="ChEBI" id="CHEBI:15378"/>
        <dbReference type="ChEBI" id="CHEBI:16526"/>
        <dbReference type="ChEBI" id="CHEBI:57792"/>
        <dbReference type="ChEBI" id="CHEBI:59776"/>
        <dbReference type="EC" id="2.2.1.7"/>
    </reaction>
</comment>
<comment type="cofactor">
    <cofactor evidence="1">
        <name>Mg(2+)</name>
        <dbReference type="ChEBI" id="CHEBI:18420"/>
    </cofactor>
    <text evidence="1">Binds 1 Mg(2+) ion per subunit.</text>
</comment>
<comment type="cofactor">
    <cofactor evidence="1">
        <name>thiamine diphosphate</name>
        <dbReference type="ChEBI" id="CHEBI:58937"/>
    </cofactor>
    <text evidence="1">Binds 1 thiamine pyrophosphate per subunit.</text>
</comment>
<comment type="pathway">
    <text>Metabolic intermediate biosynthesis; 1-deoxy-D-xylulose 5-phosphate biosynthesis; 1-deoxy-D-xylulose 5-phosphate from D-glyceraldehyde 3-phosphate and pyruvate: step 1/1.</text>
</comment>
<comment type="subunit">
    <text evidence="1">Homodimer.</text>
</comment>
<comment type="subcellular location">
    <subcellularLocation>
        <location evidence="3">Plastid</location>
        <location evidence="3">Chloroplast</location>
    </subcellularLocation>
</comment>
<comment type="similarity">
    <text evidence="3">Belongs to the transketolase family. DXPS subfamily.</text>
</comment>
<gene>
    <name type="primary">TKT2</name>
</gene>
<evidence type="ECO:0000250" key="1"/>
<evidence type="ECO:0000255" key="2"/>
<evidence type="ECO:0000305" key="3"/>
<name>DXS_CAPAN</name>
<keyword id="KW-0150">Chloroplast</keyword>
<keyword id="KW-0414">Isoprene biosynthesis</keyword>
<keyword id="KW-0460">Magnesium</keyword>
<keyword id="KW-0479">Metal-binding</keyword>
<keyword id="KW-0934">Plastid</keyword>
<keyword id="KW-0784">Thiamine biosynthesis</keyword>
<keyword id="KW-0786">Thiamine pyrophosphate</keyword>
<keyword id="KW-0808">Transferase</keyword>
<keyword id="KW-0809">Transit peptide</keyword>
<sequence>MALCAYAFPGILNRTVAVASDASKPTPLFSEWIHGTDLQFQFHQKLTQVKKRSRTVQASLSESGEYYTQRPPTPIVDTINYPIHMKNLSLKELKQLADELRSDTIFNVSKTGGHLGSSLGVVELTVALHYVFNAPQDRILWDVGHQSYPHKILTGRREKMSTLRQTNGLAGFTKRSESEYDCFGTGHSSTTISAGLGMAVGRDLKGRNNNVIAVIGDGAMTAGQAYEAMNNAGYLDSDMIVILNDNRQVSLPTATLDGPVPPVGALSSALSRLQSNRPLRELREVAKGVTKQIGGPMHELAAKVDEYARGMISGSGSTLFEELGLYYIGPVDGHNIDDLISILKEVRSTKTTGPVLIHVVTEKGRGYPYAERAADKYHGVAKFDPATGKQFKGSAKTQSYTTYFAEALIAEAEADKDIVAIHAAMGGGTGMNLFLRRFPTRCFDVGIAEQHAVTFAAGLACEGLKPFCAIYSSFMQRAYDQVVHDVDLQKLPVRFAMDRAGLVGADGPTHCGAFDVTFMACLPNMVVMAPSDEAELFHIVATAAAIDDRPSCFRYPRGNGIGVELPAGNKGIPLEVGKGRILVEGERVALLGYGSAVQNCLAAASVLESRGLQVTVADARFCKPLDRALIRSLAKSHEVLVTVEKGSIGGFGSHVVQFMALDGLLDGKLKWRPIVLPDRYIDHGSPADQLAEAGLTPSHIAATVFNILGQTREALEVMT</sequence>
<organism>
    <name type="scientific">Capsicum annuum</name>
    <name type="common">Capsicum pepper</name>
    <dbReference type="NCBI Taxonomy" id="4072"/>
    <lineage>
        <taxon>Eukaryota</taxon>
        <taxon>Viridiplantae</taxon>
        <taxon>Streptophyta</taxon>
        <taxon>Embryophyta</taxon>
        <taxon>Tracheophyta</taxon>
        <taxon>Spermatophyta</taxon>
        <taxon>Magnoliopsida</taxon>
        <taxon>eudicotyledons</taxon>
        <taxon>Gunneridae</taxon>
        <taxon>Pentapetalae</taxon>
        <taxon>asterids</taxon>
        <taxon>lamiids</taxon>
        <taxon>Solanales</taxon>
        <taxon>Solanaceae</taxon>
        <taxon>Solanoideae</taxon>
        <taxon>Capsiceae</taxon>
        <taxon>Capsicum</taxon>
    </lineage>
</organism>
<protein>
    <recommendedName>
        <fullName>Probable 1-deoxy-D-xylulose-5-phosphate synthase, chloroplastic</fullName>
        <shortName>1-deoxyxylulose-5-phosphate synthase</shortName>
        <shortName>DXP synthase</shortName>
        <shortName>DXPS</shortName>
        <ecNumber>2.2.1.7</ecNumber>
    </recommendedName>
    <alternativeName>
        <fullName>CapTKT2</fullName>
    </alternativeName>
</protein>
<accession>O78328</accession>
<feature type="transit peptide" description="Chloroplast" evidence="2">
    <location>
        <begin position="1"/>
        <end position="57"/>
    </location>
</feature>
<feature type="chain" id="PRO_0000007394" description="Probable 1-deoxy-D-xylulose-5-phosphate synthase, chloroplastic">
    <location>
        <begin position="58"/>
        <end position="719"/>
    </location>
</feature>
<feature type="binding site" evidence="1">
    <location>
        <position position="145"/>
    </location>
    <ligand>
        <name>thiamine diphosphate</name>
        <dbReference type="ChEBI" id="CHEBI:58937"/>
    </ligand>
</feature>
<feature type="binding site" evidence="1">
    <location>
        <begin position="186"/>
        <end position="188"/>
    </location>
    <ligand>
        <name>thiamine diphosphate</name>
        <dbReference type="ChEBI" id="CHEBI:58937"/>
    </ligand>
</feature>
<feature type="binding site" evidence="1">
    <location>
        <position position="217"/>
    </location>
    <ligand>
        <name>Mg(2+)</name>
        <dbReference type="ChEBI" id="CHEBI:18420"/>
    </ligand>
</feature>
<feature type="binding site" evidence="1">
    <location>
        <begin position="218"/>
        <end position="219"/>
    </location>
    <ligand>
        <name>thiamine diphosphate</name>
        <dbReference type="ChEBI" id="CHEBI:58937"/>
    </ligand>
</feature>
<feature type="binding site" evidence="1">
    <location>
        <position position="246"/>
    </location>
    <ligand>
        <name>Mg(2+)</name>
        <dbReference type="ChEBI" id="CHEBI:18420"/>
    </ligand>
</feature>
<feature type="binding site" evidence="1">
    <location>
        <position position="246"/>
    </location>
    <ligand>
        <name>thiamine diphosphate</name>
        <dbReference type="ChEBI" id="CHEBI:58937"/>
    </ligand>
</feature>
<feature type="binding site" evidence="1">
    <location>
        <position position="367"/>
    </location>
    <ligand>
        <name>thiamine diphosphate</name>
        <dbReference type="ChEBI" id="CHEBI:58937"/>
    </ligand>
</feature>
<feature type="binding site" evidence="1">
    <location>
        <position position="449"/>
    </location>
    <ligand>
        <name>thiamine diphosphate</name>
        <dbReference type="ChEBI" id="CHEBI:58937"/>
    </ligand>
</feature>
<proteinExistence type="evidence at transcript level"/>